<dbReference type="EC" id="2.4.2.18" evidence="1"/>
<dbReference type="EMBL" id="CP000458">
    <property type="protein sequence ID" value="ABK07286.1"/>
    <property type="status" value="ALT_INIT"/>
    <property type="molecule type" value="Genomic_DNA"/>
</dbReference>
<dbReference type="RefSeq" id="WP_006477042.1">
    <property type="nucleotide sequence ID" value="NC_008542.1"/>
</dbReference>
<dbReference type="SMR" id="A0K459"/>
<dbReference type="KEGG" id="bch:Bcen2424_0532"/>
<dbReference type="HOGENOM" id="CLU_034315_2_1_4"/>
<dbReference type="UniPathway" id="UPA00035">
    <property type="reaction ID" value="UER00041"/>
</dbReference>
<dbReference type="GO" id="GO:0005829">
    <property type="term" value="C:cytosol"/>
    <property type="evidence" value="ECO:0007669"/>
    <property type="project" value="TreeGrafter"/>
</dbReference>
<dbReference type="GO" id="GO:0004048">
    <property type="term" value="F:anthranilate phosphoribosyltransferase activity"/>
    <property type="evidence" value="ECO:0007669"/>
    <property type="project" value="UniProtKB-UniRule"/>
</dbReference>
<dbReference type="GO" id="GO:0000287">
    <property type="term" value="F:magnesium ion binding"/>
    <property type="evidence" value="ECO:0007669"/>
    <property type="project" value="UniProtKB-UniRule"/>
</dbReference>
<dbReference type="GO" id="GO:0000162">
    <property type="term" value="P:L-tryptophan biosynthetic process"/>
    <property type="evidence" value="ECO:0007669"/>
    <property type="project" value="UniProtKB-UniRule"/>
</dbReference>
<dbReference type="FunFam" id="1.20.970.10:FF:000006">
    <property type="entry name" value="Anthranilate phosphoribosyltransferase"/>
    <property type="match status" value="1"/>
</dbReference>
<dbReference type="FunFam" id="3.40.1030.10:FF:000002">
    <property type="entry name" value="Anthranilate phosphoribosyltransferase"/>
    <property type="match status" value="1"/>
</dbReference>
<dbReference type="Gene3D" id="3.40.1030.10">
    <property type="entry name" value="Nucleoside phosphorylase/phosphoribosyltransferase catalytic domain"/>
    <property type="match status" value="1"/>
</dbReference>
<dbReference type="Gene3D" id="1.20.970.10">
    <property type="entry name" value="Transferase, Pyrimidine Nucleoside Phosphorylase, Chain C"/>
    <property type="match status" value="1"/>
</dbReference>
<dbReference type="HAMAP" id="MF_00211">
    <property type="entry name" value="TrpD"/>
    <property type="match status" value="1"/>
</dbReference>
<dbReference type="InterPro" id="IPR005940">
    <property type="entry name" value="Anthranilate_Pribosyl_Tfrase"/>
</dbReference>
<dbReference type="InterPro" id="IPR000312">
    <property type="entry name" value="Glycosyl_Trfase_fam3"/>
</dbReference>
<dbReference type="InterPro" id="IPR017459">
    <property type="entry name" value="Glycosyl_Trfase_fam3_N_dom"/>
</dbReference>
<dbReference type="InterPro" id="IPR036320">
    <property type="entry name" value="Glycosyl_Trfase_fam3_N_dom_sf"/>
</dbReference>
<dbReference type="InterPro" id="IPR035902">
    <property type="entry name" value="Nuc_phospho_transferase"/>
</dbReference>
<dbReference type="NCBIfam" id="TIGR01245">
    <property type="entry name" value="trpD"/>
    <property type="match status" value="1"/>
</dbReference>
<dbReference type="PANTHER" id="PTHR43285">
    <property type="entry name" value="ANTHRANILATE PHOSPHORIBOSYLTRANSFERASE"/>
    <property type="match status" value="1"/>
</dbReference>
<dbReference type="PANTHER" id="PTHR43285:SF2">
    <property type="entry name" value="ANTHRANILATE PHOSPHORIBOSYLTRANSFERASE"/>
    <property type="match status" value="1"/>
</dbReference>
<dbReference type="Pfam" id="PF02885">
    <property type="entry name" value="Glycos_trans_3N"/>
    <property type="match status" value="1"/>
</dbReference>
<dbReference type="Pfam" id="PF00591">
    <property type="entry name" value="Glycos_transf_3"/>
    <property type="match status" value="1"/>
</dbReference>
<dbReference type="SUPFAM" id="SSF52418">
    <property type="entry name" value="Nucleoside phosphorylase/phosphoribosyltransferase catalytic domain"/>
    <property type="match status" value="1"/>
</dbReference>
<dbReference type="SUPFAM" id="SSF47648">
    <property type="entry name" value="Nucleoside phosphorylase/phosphoribosyltransferase N-terminal domain"/>
    <property type="match status" value="1"/>
</dbReference>
<sequence>MTITPQEALQRTIEHREIFHDEMLHLMRLIMRGDLSPVMAAAIITGLRVKKETIGEIAAAATVMREFANHVEVQDNSNFVDIVGTGGDGSHTFNISTASMFVTAAAGAKVAKHGNRGVSSKSGSADVLEALGVNIDLQSEQVAASIAETGMGFMFAPNHHPAMKNIAAVRRELGVRTIFNILGPLTNPAGAPNQLMGVFHPDLVGIQVRVMQRLGAQHVLVVYGKDGMDEVSLGAATLVGELRDGKVHEYEIHPEDFGLQMVSNRTLKVENADESRTMLLGALDNQPGVAREIVTLNAGTALYAANIAESIADGIQLAREAIASGKARAKVDELVRFTQQFKR</sequence>
<reference key="1">
    <citation type="submission" date="2006-08" db="EMBL/GenBank/DDBJ databases">
        <title>Complete sequence of chromosome 1 of Burkholderia cenocepacia HI2424.</title>
        <authorList>
            <person name="Copeland A."/>
            <person name="Lucas S."/>
            <person name="Lapidus A."/>
            <person name="Barry K."/>
            <person name="Detter J.C."/>
            <person name="Glavina del Rio T."/>
            <person name="Hammon N."/>
            <person name="Israni S."/>
            <person name="Pitluck S."/>
            <person name="Chain P."/>
            <person name="Malfatti S."/>
            <person name="Shin M."/>
            <person name="Vergez L."/>
            <person name="Schmutz J."/>
            <person name="Larimer F."/>
            <person name="Land M."/>
            <person name="Hauser L."/>
            <person name="Kyrpides N."/>
            <person name="Kim E."/>
            <person name="LiPuma J.J."/>
            <person name="Gonzalez C.F."/>
            <person name="Konstantinidis K."/>
            <person name="Tiedje J.M."/>
            <person name="Richardson P."/>
        </authorList>
    </citation>
    <scope>NUCLEOTIDE SEQUENCE [LARGE SCALE GENOMIC DNA]</scope>
    <source>
        <strain>HI2424</strain>
    </source>
</reference>
<gene>
    <name evidence="1" type="primary">trpD</name>
    <name type="ordered locus">Bcen2424_0532</name>
</gene>
<organism>
    <name type="scientific">Burkholderia cenocepacia (strain HI2424)</name>
    <dbReference type="NCBI Taxonomy" id="331272"/>
    <lineage>
        <taxon>Bacteria</taxon>
        <taxon>Pseudomonadati</taxon>
        <taxon>Pseudomonadota</taxon>
        <taxon>Betaproteobacteria</taxon>
        <taxon>Burkholderiales</taxon>
        <taxon>Burkholderiaceae</taxon>
        <taxon>Burkholderia</taxon>
        <taxon>Burkholderia cepacia complex</taxon>
    </lineage>
</organism>
<evidence type="ECO:0000255" key="1">
    <source>
        <dbReference type="HAMAP-Rule" id="MF_00211"/>
    </source>
</evidence>
<evidence type="ECO:0000305" key="2"/>
<comment type="function">
    <text evidence="1">Catalyzes the transfer of the phosphoribosyl group of 5-phosphorylribose-1-pyrophosphate (PRPP) to anthranilate to yield N-(5'-phosphoribosyl)-anthranilate (PRA).</text>
</comment>
<comment type="catalytic activity">
    <reaction evidence="1">
        <text>N-(5-phospho-beta-D-ribosyl)anthranilate + diphosphate = 5-phospho-alpha-D-ribose 1-diphosphate + anthranilate</text>
        <dbReference type="Rhea" id="RHEA:11768"/>
        <dbReference type="ChEBI" id="CHEBI:16567"/>
        <dbReference type="ChEBI" id="CHEBI:18277"/>
        <dbReference type="ChEBI" id="CHEBI:33019"/>
        <dbReference type="ChEBI" id="CHEBI:58017"/>
        <dbReference type="EC" id="2.4.2.18"/>
    </reaction>
</comment>
<comment type="cofactor">
    <cofactor evidence="1">
        <name>Mg(2+)</name>
        <dbReference type="ChEBI" id="CHEBI:18420"/>
    </cofactor>
    <text evidence="1">Binds 2 magnesium ions per monomer.</text>
</comment>
<comment type="pathway">
    <text evidence="1">Amino-acid biosynthesis; L-tryptophan biosynthesis; L-tryptophan from chorismate: step 2/5.</text>
</comment>
<comment type="subunit">
    <text evidence="1">Homodimer.</text>
</comment>
<comment type="similarity">
    <text evidence="1">Belongs to the anthranilate phosphoribosyltransferase family.</text>
</comment>
<comment type="sequence caution" evidence="2">
    <conflict type="erroneous initiation">
        <sequence resource="EMBL-CDS" id="ABK07286"/>
    </conflict>
    <text>Extended N-terminus.</text>
</comment>
<proteinExistence type="inferred from homology"/>
<protein>
    <recommendedName>
        <fullName evidence="1">Anthranilate phosphoribosyltransferase</fullName>
        <ecNumber evidence="1">2.4.2.18</ecNumber>
    </recommendedName>
</protein>
<name>TRPD_BURCH</name>
<feature type="chain" id="PRO_0000325417" description="Anthranilate phosphoribosyltransferase">
    <location>
        <begin position="1"/>
        <end position="343"/>
    </location>
</feature>
<feature type="binding site" evidence="1">
    <location>
        <position position="84"/>
    </location>
    <ligand>
        <name>5-phospho-alpha-D-ribose 1-diphosphate</name>
        <dbReference type="ChEBI" id="CHEBI:58017"/>
    </ligand>
</feature>
<feature type="binding site" evidence="1">
    <location>
        <position position="84"/>
    </location>
    <ligand>
        <name>anthranilate</name>
        <dbReference type="ChEBI" id="CHEBI:16567"/>
        <label>1</label>
    </ligand>
</feature>
<feature type="binding site" evidence="1">
    <location>
        <begin position="87"/>
        <end position="88"/>
    </location>
    <ligand>
        <name>5-phospho-alpha-D-ribose 1-diphosphate</name>
        <dbReference type="ChEBI" id="CHEBI:58017"/>
    </ligand>
</feature>
<feature type="binding site" evidence="1">
    <location>
        <position position="92"/>
    </location>
    <ligand>
        <name>5-phospho-alpha-D-ribose 1-diphosphate</name>
        <dbReference type="ChEBI" id="CHEBI:58017"/>
    </ligand>
</feature>
<feature type="binding site" evidence="1">
    <location>
        <begin position="94"/>
        <end position="97"/>
    </location>
    <ligand>
        <name>5-phospho-alpha-D-ribose 1-diphosphate</name>
        <dbReference type="ChEBI" id="CHEBI:58017"/>
    </ligand>
</feature>
<feature type="binding site" evidence="1">
    <location>
        <position position="96"/>
    </location>
    <ligand>
        <name>Mg(2+)</name>
        <dbReference type="ChEBI" id="CHEBI:18420"/>
        <label>1</label>
    </ligand>
</feature>
<feature type="binding site" evidence="1">
    <location>
        <begin position="112"/>
        <end position="120"/>
    </location>
    <ligand>
        <name>5-phospho-alpha-D-ribose 1-diphosphate</name>
        <dbReference type="ChEBI" id="CHEBI:58017"/>
    </ligand>
</feature>
<feature type="binding site" evidence="1">
    <location>
        <position position="115"/>
    </location>
    <ligand>
        <name>anthranilate</name>
        <dbReference type="ChEBI" id="CHEBI:16567"/>
        <label>1</label>
    </ligand>
</feature>
<feature type="binding site" evidence="1">
    <location>
        <position position="124"/>
    </location>
    <ligand>
        <name>5-phospho-alpha-D-ribose 1-diphosphate</name>
        <dbReference type="ChEBI" id="CHEBI:58017"/>
    </ligand>
</feature>
<feature type="binding site" evidence="1">
    <location>
        <position position="170"/>
    </location>
    <ligand>
        <name>anthranilate</name>
        <dbReference type="ChEBI" id="CHEBI:16567"/>
        <label>2</label>
    </ligand>
</feature>
<feature type="binding site" evidence="1">
    <location>
        <position position="229"/>
    </location>
    <ligand>
        <name>Mg(2+)</name>
        <dbReference type="ChEBI" id="CHEBI:18420"/>
        <label>2</label>
    </ligand>
</feature>
<feature type="binding site" evidence="1">
    <location>
        <position position="230"/>
    </location>
    <ligand>
        <name>Mg(2+)</name>
        <dbReference type="ChEBI" id="CHEBI:18420"/>
        <label>1</label>
    </ligand>
</feature>
<feature type="binding site" evidence="1">
    <location>
        <position position="230"/>
    </location>
    <ligand>
        <name>Mg(2+)</name>
        <dbReference type="ChEBI" id="CHEBI:18420"/>
        <label>2</label>
    </ligand>
</feature>
<accession>A0K459</accession>
<keyword id="KW-0028">Amino-acid biosynthesis</keyword>
<keyword id="KW-0057">Aromatic amino acid biosynthesis</keyword>
<keyword id="KW-0328">Glycosyltransferase</keyword>
<keyword id="KW-0460">Magnesium</keyword>
<keyword id="KW-0479">Metal-binding</keyword>
<keyword id="KW-0808">Transferase</keyword>
<keyword id="KW-0822">Tryptophan biosynthesis</keyword>